<sequence length="179" mass="19841">MASSASGMEEVRSSVLTPLKLVGLVCIFLALCLDIGAVLSPAWVTADNQYYLSLWESCKKSENRWICDSTLQSDWQIATLALLLGGAAIILIAFLVGLISICVGSRRRFYRPVAVMLFAAVVLQVCGLVLYPIKFIETVTLKIYHEFNWGYGLAWGATIFSFGGAILYCLNPKNYEDYY</sequence>
<comment type="function">
    <text evidence="1 2">Regulates cell junction organization in epithelial cells. May play a role in the transition from adherens junction to tight junction assembly.</text>
</comment>
<comment type="subcellular location">
    <subcellularLocation>
        <location evidence="4">Membrane</location>
        <topology evidence="4">Multi-pass membrane protein</topology>
    </subcellularLocation>
    <subcellularLocation>
        <location evidence="2">Cell junction</location>
        <location evidence="2">Adherens junction</location>
    </subcellularLocation>
</comment>
<comment type="similarity">
    <text evidence="4">Belongs to the TMEM47 family.</text>
</comment>
<dbReference type="EMBL" id="BC072100">
    <property type="protein sequence ID" value="AAH72100.1"/>
    <property type="molecule type" value="mRNA"/>
</dbReference>
<dbReference type="RefSeq" id="NP_001085134.1">
    <property type="nucleotide sequence ID" value="NM_001091665.1"/>
</dbReference>
<dbReference type="SMR" id="Q6IP19"/>
<dbReference type="DNASU" id="432211"/>
<dbReference type="GeneID" id="432211"/>
<dbReference type="KEGG" id="xla:432211"/>
<dbReference type="AGR" id="Xenbase:XB-GENE-951343"/>
<dbReference type="CTD" id="432211"/>
<dbReference type="Xenbase" id="XB-GENE-951343">
    <property type="gene designation" value="tmem47.L"/>
</dbReference>
<dbReference type="OMA" id="SENRWIC"/>
<dbReference type="OrthoDB" id="8655982at2759"/>
<dbReference type="Proteomes" id="UP000186698">
    <property type="component" value="Chromosome 2L"/>
</dbReference>
<dbReference type="Bgee" id="432211">
    <property type="expression patterns" value="Expressed in internal ear and 16 other cell types or tissues"/>
</dbReference>
<dbReference type="GO" id="GO:0005912">
    <property type="term" value="C:adherens junction"/>
    <property type="evidence" value="ECO:0007669"/>
    <property type="project" value="UniProtKB-SubCell"/>
</dbReference>
<dbReference type="GO" id="GO:0005911">
    <property type="term" value="C:cell-cell junction"/>
    <property type="evidence" value="ECO:0000318"/>
    <property type="project" value="GO_Central"/>
</dbReference>
<dbReference type="GO" id="GO:0016020">
    <property type="term" value="C:membrane"/>
    <property type="evidence" value="ECO:0007669"/>
    <property type="project" value="UniProtKB-SubCell"/>
</dbReference>
<dbReference type="GO" id="GO:0098609">
    <property type="term" value="P:cell-cell adhesion"/>
    <property type="evidence" value="ECO:0000318"/>
    <property type="project" value="GO_Central"/>
</dbReference>
<dbReference type="FunFam" id="1.20.140.150:FF:000010">
    <property type="entry name" value="transmembrane protein 47"/>
    <property type="match status" value="1"/>
</dbReference>
<dbReference type="Gene3D" id="1.20.140.150">
    <property type="match status" value="1"/>
</dbReference>
<dbReference type="InterPro" id="IPR015664">
    <property type="entry name" value="P53_induced"/>
</dbReference>
<dbReference type="PANTHER" id="PTHR14399">
    <property type="entry name" value="P53-INDUCED PROTEIN RELATED"/>
    <property type="match status" value="1"/>
</dbReference>
<dbReference type="PANTHER" id="PTHR14399:SF3">
    <property type="entry name" value="TRANSMEMBRANE PROTEIN 47"/>
    <property type="match status" value="1"/>
</dbReference>
<feature type="chain" id="PRO_0000072575" description="Transmembrane protein 47">
    <location>
        <begin position="1"/>
        <end position="179"/>
    </location>
</feature>
<feature type="transmembrane region" description="Helical" evidence="3">
    <location>
        <begin position="21"/>
        <end position="41"/>
    </location>
</feature>
<feature type="transmembrane region" description="Helical" evidence="3">
    <location>
        <begin position="81"/>
        <end position="101"/>
    </location>
</feature>
<feature type="transmembrane region" description="Helical" evidence="3">
    <location>
        <begin position="113"/>
        <end position="133"/>
    </location>
</feature>
<feature type="transmembrane region" description="Helical" evidence="3">
    <location>
        <begin position="150"/>
        <end position="170"/>
    </location>
</feature>
<name>TMM47_XENLA</name>
<proteinExistence type="evidence at transcript level"/>
<gene>
    <name type="primary">tmem47</name>
    <name type="synonym">tm4sf10</name>
</gene>
<protein>
    <recommendedName>
        <fullName>Transmembrane protein 47</fullName>
    </recommendedName>
    <alternativeName>
        <fullName>Transmembrane 4 superfamily member 10</fullName>
    </alternativeName>
</protein>
<reference key="1">
    <citation type="submission" date="2004-06" db="EMBL/GenBank/DDBJ databases">
        <authorList>
            <consortium name="NIH - Xenopus Gene Collection (XGC) project"/>
        </authorList>
    </citation>
    <scope>NUCLEOTIDE SEQUENCE [LARGE SCALE MRNA]</scope>
    <source>
        <tissue>Heart</tissue>
    </source>
</reference>
<accession>Q6IP19</accession>
<organism>
    <name type="scientific">Xenopus laevis</name>
    <name type="common">African clawed frog</name>
    <dbReference type="NCBI Taxonomy" id="8355"/>
    <lineage>
        <taxon>Eukaryota</taxon>
        <taxon>Metazoa</taxon>
        <taxon>Chordata</taxon>
        <taxon>Craniata</taxon>
        <taxon>Vertebrata</taxon>
        <taxon>Euteleostomi</taxon>
        <taxon>Amphibia</taxon>
        <taxon>Batrachia</taxon>
        <taxon>Anura</taxon>
        <taxon>Pipoidea</taxon>
        <taxon>Pipidae</taxon>
        <taxon>Xenopodinae</taxon>
        <taxon>Xenopus</taxon>
        <taxon>Xenopus</taxon>
    </lineage>
</organism>
<evidence type="ECO:0000250" key="1">
    <source>
        <dbReference type="UniProtKB" id="Q9JJG6"/>
    </source>
</evidence>
<evidence type="ECO:0000250" key="2">
    <source>
        <dbReference type="UniProtKB" id="Q9XSV3"/>
    </source>
</evidence>
<evidence type="ECO:0000255" key="3"/>
<evidence type="ECO:0000305" key="4"/>
<keyword id="KW-0965">Cell junction</keyword>
<keyword id="KW-0472">Membrane</keyword>
<keyword id="KW-1185">Reference proteome</keyword>
<keyword id="KW-0812">Transmembrane</keyword>
<keyword id="KW-1133">Transmembrane helix</keyword>